<reference key="1">
    <citation type="journal article" date="1999" name="Immunogenetics">
        <title>Characterisation of beta2-microglubulin in a primitive fish the Siberian sturgeon (Acipenser baeri).</title>
        <authorList>
            <person name="Lundqvist M.L."/>
            <person name="Appelkvist P."/>
            <person name="Hermsen T."/>
            <person name="Pilstroem L."/>
            <person name="Stet R.J.M."/>
        </authorList>
    </citation>
    <scope>NUCLEOTIDE SEQUENCE [GENOMIC DNA / MRNA]</scope>
    <source>
        <tissue>Spleen</tissue>
    </source>
</reference>
<feature type="signal peptide" evidence="2">
    <location>
        <begin position="1"/>
        <end position="23"/>
    </location>
</feature>
<feature type="chain" id="PRO_0000018805" description="Beta-2-microglobulin">
    <location>
        <begin position="24"/>
        <end position="122"/>
    </location>
</feature>
<feature type="domain" description="Ig-like C1-type">
    <location>
        <begin position="28"/>
        <end position="117"/>
    </location>
</feature>
<feature type="disulfide bond" evidence="3">
    <location>
        <begin position="48"/>
        <end position="103"/>
    </location>
</feature>
<feature type="sequence variant" description="In a1.">
    <original>L</original>
    <variation>R</variation>
    <location>
        <position position="3"/>
    </location>
</feature>
<feature type="sequence variant" description="In b1.">
    <original>H</original>
    <variation>Q</variation>
    <location>
        <position position="54"/>
    </location>
</feature>
<feature type="sequence variant" description="In b1 and b2.">
    <original>EATR</original>
    <variation>GAKS</variation>
    <location>
        <begin position="112"/>
        <end position="115"/>
    </location>
</feature>
<sequence>MFLRSTFVAALVACLAYIHLGDATEAMPKVQIYSRNVGELGKPNTLICHVSGFHPPNIKLQLLKNDVEIEGAQQSDLAFHQGWHFHLTKSVAFTPKEGEHYSCKVEHSTLREATRFTWTPDM</sequence>
<evidence type="ECO:0000250" key="1"/>
<evidence type="ECO:0000255" key="2"/>
<evidence type="ECO:0000255" key="3">
    <source>
        <dbReference type="PROSITE-ProRule" id="PRU00114"/>
    </source>
</evidence>
<evidence type="ECO:0000305" key="4"/>
<protein>
    <recommendedName>
        <fullName>Beta-2-microglobulin</fullName>
    </recommendedName>
</protein>
<proteinExistence type="evidence at transcript level"/>
<comment type="function">
    <text evidence="1">Component of the class I major histocompatibility complex (MHC). Involved in the presentation of peptide antigens to the immune system (By similarity).</text>
</comment>
<comment type="subunit">
    <text evidence="1">Heterodimer of an alpha chain and a beta chain. Beta-2-microglobulin is the beta-chain of major histocompatibility complex class I molecules (By similarity).</text>
</comment>
<comment type="subcellular location">
    <subcellularLocation>
        <location evidence="1">Secreted</location>
    </subcellularLocation>
</comment>
<comment type="similarity">
    <text evidence="4">Belongs to the beta-2-microglobulin family.</text>
</comment>
<gene>
    <name type="primary">b2m</name>
</gene>
<keyword id="KW-1015">Disulfide bond</keyword>
<keyword id="KW-0391">Immunity</keyword>
<keyword id="KW-0393">Immunoglobulin domain</keyword>
<keyword id="KW-0490">MHC I</keyword>
<keyword id="KW-0964">Secreted</keyword>
<keyword id="KW-0732">Signal</keyword>
<organism>
    <name type="scientific">Acipenser baerii</name>
    <name type="common">Siberian sturgeon</name>
    <dbReference type="NCBI Taxonomy" id="27689"/>
    <lineage>
        <taxon>Eukaryota</taxon>
        <taxon>Metazoa</taxon>
        <taxon>Chordata</taxon>
        <taxon>Craniata</taxon>
        <taxon>Vertebrata</taxon>
        <taxon>Euteleostomi</taxon>
        <taxon>Actinopterygii</taxon>
        <taxon>Chondrostei</taxon>
        <taxon>Acipenseriformes</taxon>
        <taxon>Acipenseridae</taxon>
        <taxon>Acipenser</taxon>
    </lineage>
</organism>
<dbReference type="EMBL" id="AJ132766">
    <property type="protein sequence ID" value="CAB61322.1"/>
    <property type="molecule type" value="mRNA"/>
</dbReference>
<dbReference type="EMBL" id="AJ133652">
    <property type="protein sequence ID" value="CAB61323.1"/>
    <property type="molecule type" value="Genomic_DNA"/>
</dbReference>
<dbReference type="EMBL" id="AJ133653">
    <property type="protein sequence ID" value="CAB61324.1"/>
    <property type="molecule type" value="Genomic_DNA"/>
</dbReference>
<dbReference type="EMBL" id="AJ133654">
    <property type="protein sequence ID" value="CAB61325.1"/>
    <property type="molecule type" value="Genomic_DNA"/>
</dbReference>
<dbReference type="EMBL" id="AJ133655">
    <property type="protein sequence ID" value="CAB61326.1"/>
    <property type="molecule type" value="Genomic_DNA"/>
</dbReference>
<dbReference type="SMR" id="Q9PRF8"/>
<dbReference type="GO" id="GO:0005576">
    <property type="term" value="C:extracellular region"/>
    <property type="evidence" value="ECO:0007669"/>
    <property type="project" value="UniProtKB-SubCell"/>
</dbReference>
<dbReference type="GO" id="GO:0042612">
    <property type="term" value="C:MHC class I protein complex"/>
    <property type="evidence" value="ECO:0007669"/>
    <property type="project" value="UniProtKB-KW"/>
</dbReference>
<dbReference type="GO" id="GO:0002474">
    <property type="term" value="P:antigen processing and presentation of peptide antigen via MHC class I"/>
    <property type="evidence" value="ECO:0007669"/>
    <property type="project" value="UniProtKB-KW"/>
</dbReference>
<dbReference type="FunFam" id="2.60.40.10:FF:001005">
    <property type="entry name" value="Beta-2-microglobulin"/>
    <property type="match status" value="1"/>
</dbReference>
<dbReference type="Gene3D" id="2.60.40.10">
    <property type="entry name" value="Immunoglobulins"/>
    <property type="match status" value="1"/>
</dbReference>
<dbReference type="InterPro" id="IPR007110">
    <property type="entry name" value="Ig-like_dom"/>
</dbReference>
<dbReference type="InterPro" id="IPR036179">
    <property type="entry name" value="Ig-like_dom_sf"/>
</dbReference>
<dbReference type="InterPro" id="IPR013783">
    <property type="entry name" value="Ig-like_fold"/>
</dbReference>
<dbReference type="InterPro" id="IPR003006">
    <property type="entry name" value="Ig/MHC_CS"/>
</dbReference>
<dbReference type="InterPro" id="IPR003597">
    <property type="entry name" value="Ig_C1-set"/>
</dbReference>
<dbReference type="InterPro" id="IPR050160">
    <property type="entry name" value="MHC/Immunoglobulin"/>
</dbReference>
<dbReference type="PANTHER" id="PTHR19944:SF62">
    <property type="entry name" value="BETA-2-MICROGLOBULIN"/>
    <property type="match status" value="1"/>
</dbReference>
<dbReference type="PANTHER" id="PTHR19944">
    <property type="entry name" value="MHC CLASS II-RELATED"/>
    <property type="match status" value="1"/>
</dbReference>
<dbReference type="Pfam" id="PF07654">
    <property type="entry name" value="C1-set"/>
    <property type="match status" value="1"/>
</dbReference>
<dbReference type="SMART" id="SM00407">
    <property type="entry name" value="IGc1"/>
    <property type="match status" value="1"/>
</dbReference>
<dbReference type="SUPFAM" id="SSF48726">
    <property type="entry name" value="Immunoglobulin"/>
    <property type="match status" value="1"/>
</dbReference>
<dbReference type="PROSITE" id="PS50835">
    <property type="entry name" value="IG_LIKE"/>
    <property type="match status" value="1"/>
</dbReference>
<dbReference type="PROSITE" id="PS00290">
    <property type="entry name" value="IG_MHC"/>
    <property type="match status" value="1"/>
</dbReference>
<name>B2MG_ACIBE</name>
<accession>Q9PRF8</accession>
<accession>Q9PVL3</accession>
<accession>Q9PVL4</accession>
<accession>Q9PVL5</accession>